<proteinExistence type="evidence at protein level"/>
<gene>
    <name type="primary">Cd68</name>
</gene>
<reference key="1">
    <citation type="journal article" date="1993" name="J. Biol. Chem.">
        <title>Macrosialin, a mouse macrophage-restricted glycoprotein, is a member of the lamp/lgp family.</title>
        <authorList>
            <person name="Holness C.L."/>
            <person name="da Silva R.P."/>
            <person name="Fawcett J."/>
            <person name="Gordon S."/>
            <person name="Simmons D.L."/>
        </authorList>
    </citation>
    <scope>NUCLEOTIDE SEQUENCE [MRNA] (ISOFORMS LONG AND SHORT)</scope>
    <source>
        <strain>BALB/cJ</strain>
        <tissue>Macrophage</tissue>
    </source>
</reference>
<reference key="2">
    <citation type="journal article" date="1998" name="Genomics">
        <title>Structure, organization, and chromosomal mapping of the gene encoding macrosialin, a macrophage-restricted protein.</title>
        <authorList>
            <person name="Jiang Z."/>
            <person name="Shih D.M."/>
            <person name="Xia Y.R."/>
            <person name="Lusis A.J."/>
            <person name="de Beer F.C."/>
            <person name="de Villiers W.J.S."/>
            <person name="van der Westhuyzen D.R."/>
            <person name="de Beer M.C."/>
        </authorList>
    </citation>
    <scope>NUCLEOTIDE SEQUENCE [GENOMIC DNA]</scope>
    <source>
        <strain>129/SvJ</strain>
    </source>
</reference>
<reference key="3">
    <citation type="journal article" date="1998" name="Genomics">
        <title>Functional comparison of the murine macrosialin and human CD68 promoters in macrophage and nonmacrophage cell lines.</title>
        <authorList>
            <person name="Greaves D.R."/>
            <person name="Quinn C.M."/>
            <person name="Seldin M.F."/>
            <person name="Gordon S."/>
        </authorList>
    </citation>
    <scope>NUCLEOTIDE SEQUENCE [GENOMIC DNA]</scope>
    <source>
        <strain>129/Sv</strain>
    </source>
</reference>
<reference key="4">
    <citation type="journal article" date="1998" name="J. Biol. Chem.">
        <title>The macrosialin promoter directs high levels of transcriptional activity in macrophages dependent on combinatorial interactions between PU.1 and c-Jun.</title>
        <authorList>
            <person name="Li A.C."/>
            <person name="Guidez F.R.B."/>
            <person name="Collier J.G."/>
            <person name="Glass C.K."/>
        </authorList>
    </citation>
    <scope>NUCLEOTIDE SEQUENCE [GENOMIC DNA]</scope>
</reference>
<reference key="5">
    <citation type="journal article" date="1999" name="Gene">
        <title>Five different genes, Eif4a1, Cd68, Supl15h, Sox15 and Fxr2h, are clustered in a 40 kb region of mouse chromosome 11.</title>
        <authorList>
            <person name="Miyashita A."/>
            <person name="Shimizu N."/>
            <person name="Endo N."/>
            <person name="Hanyuu T."/>
            <person name="Ishii N."/>
            <person name="Ito K."/>
            <person name="Itoh Y."/>
            <person name="Shirai M."/>
            <person name="Nakajima T."/>
            <person name="Odani S."/>
            <person name="Kuwano R."/>
        </authorList>
    </citation>
    <scope>NUCLEOTIDE SEQUENCE [GENOMIC DNA]</scope>
    <source>
        <strain>129</strain>
    </source>
</reference>
<reference key="6">
    <citation type="journal article" date="2005" name="Science">
        <title>The transcriptional landscape of the mammalian genome.</title>
        <authorList>
            <person name="Carninci P."/>
            <person name="Kasukawa T."/>
            <person name="Katayama S."/>
            <person name="Gough J."/>
            <person name="Frith M.C."/>
            <person name="Maeda N."/>
            <person name="Oyama R."/>
            <person name="Ravasi T."/>
            <person name="Lenhard B."/>
            <person name="Wells C."/>
            <person name="Kodzius R."/>
            <person name="Shimokawa K."/>
            <person name="Bajic V.B."/>
            <person name="Brenner S.E."/>
            <person name="Batalov S."/>
            <person name="Forrest A.R."/>
            <person name="Zavolan M."/>
            <person name="Davis M.J."/>
            <person name="Wilming L.G."/>
            <person name="Aidinis V."/>
            <person name="Allen J.E."/>
            <person name="Ambesi-Impiombato A."/>
            <person name="Apweiler R."/>
            <person name="Aturaliya R.N."/>
            <person name="Bailey T.L."/>
            <person name="Bansal M."/>
            <person name="Baxter L."/>
            <person name="Beisel K.W."/>
            <person name="Bersano T."/>
            <person name="Bono H."/>
            <person name="Chalk A.M."/>
            <person name="Chiu K.P."/>
            <person name="Choudhary V."/>
            <person name="Christoffels A."/>
            <person name="Clutterbuck D.R."/>
            <person name="Crowe M.L."/>
            <person name="Dalla E."/>
            <person name="Dalrymple B.P."/>
            <person name="de Bono B."/>
            <person name="Della Gatta G."/>
            <person name="di Bernardo D."/>
            <person name="Down T."/>
            <person name="Engstrom P."/>
            <person name="Fagiolini M."/>
            <person name="Faulkner G."/>
            <person name="Fletcher C.F."/>
            <person name="Fukushima T."/>
            <person name="Furuno M."/>
            <person name="Futaki S."/>
            <person name="Gariboldi M."/>
            <person name="Georgii-Hemming P."/>
            <person name="Gingeras T.R."/>
            <person name="Gojobori T."/>
            <person name="Green R.E."/>
            <person name="Gustincich S."/>
            <person name="Harbers M."/>
            <person name="Hayashi Y."/>
            <person name="Hensch T.K."/>
            <person name="Hirokawa N."/>
            <person name="Hill D."/>
            <person name="Huminiecki L."/>
            <person name="Iacono M."/>
            <person name="Ikeo K."/>
            <person name="Iwama A."/>
            <person name="Ishikawa T."/>
            <person name="Jakt M."/>
            <person name="Kanapin A."/>
            <person name="Katoh M."/>
            <person name="Kawasawa Y."/>
            <person name="Kelso J."/>
            <person name="Kitamura H."/>
            <person name="Kitano H."/>
            <person name="Kollias G."/>
            <person name="Krishnan S.P."/>
            <person name="Kruger A."/>
            <person name="Kummerfeld S.K."/>
            <person name="Kurochkin I.V."/>
            <person name="Lareau L.F."/>
            <person name="Lazarevic D."/>
            <person name="Lipovich L."/>
            <person name="Liu J."/>
            <person name="Liuni S."/>
            <person name="McWilliam S."/>
            <person name="Madan Babu M."/>
            <person name="Madera M."/>
            <person name="Marchionni L."/>
            <person name="Matsuda H."/>
            <person name="Matsuzawa S."/>
            <person name="Miki H."/>
            <person name="Mignone F."/>
            <person name="Miyake S."/>
            <person name="Morris K."/>
            <person name="Mottagui-Tabar S."/>
            <person name="Mulder N."/>
            <person name="Nakano N."/>
            <person name="Nakauchi H."/>
            <person name="Ng P."/>
            <person name="Nilsson R."/>
            <person name="Nishiguchi S."/>
            <person name="Nishikawa S."/>
            <person name="Nori F."/>
            <person name="Ohara O."/>
            <person name="Okazaki Y."/>
            <person name="Orlando V."/>
            <person name="Pang K.C."/>
            <person name="Pavan W.J."/>
            <person name="Pavesi G."/>
            <person name="Pesole G."/>
            <person name="Petrovsky N."/>
            <person name="Piazza S."/>
            <person name="Reed J."/>
            <person name="Reid J.F."/>
            <person name="Ring B.Z."/>
            <person name="Ringwald M."/>
            <person name="Rost B."/>
            <person name="Ruan Y."/>
            <person name="Salzberg S.L."/>
            <person name="Sandelin A."/>
            <person name="Schneider C."/>
            <person name="Schoenbach C."/>
            <person name="Sekiguchi K."/>
            <person name="Semple C.A."/>
            <person name="Seno S."/>
            <person name="Sessa L."/>
            <person name="Sheng Y."/>
            <person name="Shibata Y."/>
            <person name="Shimada H."/>
            <person name="Shimada K."/>
            <person name="Silva D."/>
            <person name="Sinclair B."/>
            <person name="Sperling S."/>
            <person name="Stupka E."/>
            <person name="Sugiura K."/>
            <person name="Sultana R."/>
            <person name="Takenaka Y."/>
            <person name="Taki K."/>
            <person name="Tammoja K."/>
            <person name="Tan S.L."/>
            <person name="Tang S."/>
            <person name="Taylor M.S."/>
            <person name="Tegner J."/>
            <person name="Teichmann S.A."/>
            <person name="Ueda H.R."/>
            <person name="van Nimwegen E."/>
            <person name="Verardo R."/>
            <person name="Wei C.L."/>
            <person name="Yagi K."/>
            <person name="Yamanishi H."/>
            <person name="Zabarovsky E."/>
            <person name="Zhu S."/>
            <person name="Zimmer A."/>
            <person name="Hide W."/>
            <person name="Bult C."/>
            <person name="Grimmond S.M."/>
            <person name="Teasdale R.D."/>
            <person name="Liu E.T."/>
            <person name="Brusic V."/>
            <person name="Quackenbush J."/>
            <person name="Wahlestedt C."/>
            <person name="Mattick J.S."/>
            <person name="Hume D.A."/>
            <person name="Kai C."/>
            <person name="Sasaki D."/>
            <person name="Tomaru Y."/>
            <person name="Fukuda S."/>
            <person name="Kanamori-Katayama M."/>
            <person name="Suzuki M."/>
            <person name="Aoki J."/>
            <person name="Arakawa T."/>
            <person name="Iida J."/>
            <person name="Imamura K."/>
            <person name="Itoh M."/>
            <person name="Kato T."/>
            <person name="Kawaji H."/>
            <person name="Kawagashira N."/>
            <person name="Kawashima T."/>
            <person name="Kojima M."/>
            <person name="Kondo S."/>
            <person name="Konno H."/>
            <person name="Nakano K."/>
            <person name="Ninomiya N."/>
            <person name="Nishio T."/>
            <person name="Okada M."/>
            <person name="Plessy C."/>
            <person name="Shibata K."/>
            <person name="Shiraki T."/>
            <person name="Suzuki S."/>
            <person name="Tagami M."/>
            <person name="Waki K."/>
            <person name="Watahiki A."/>
            <person name="Okamura-Oho Y."/>
            <person name="Suzuki H."/>
            <person name="Kawai J."/>
            <person name="Hayashizaki Y."/>
        </authorList>
    </citation>
    <scope>NUCLEOTIDE SEQUENCE [LARGE SCALE MRNA] (ISOFORM LONG)</scope>
    <source>
        <strain>C57BL/6J</strain>
        <strain>NOD</strain>
        <tissue>Dendritic cell</tissue>
        <tissue>Kidney</tissue>
    </source>
</reference>
<reference key="7">
    <citation type="journal article" date="2009" name="PLoS Biol.">
        <title>Lineage-specific biology revealed by a finished genome assembly of the mouse.</title>
        <authorList>
            <person name="Church D.M."/>
            <person name="Goodstadt L."/>
            <person name="Hillier L.W."/>
            <person name="Zody M.C."/>
            <person name="Goldstein S."/>
            <person name="She X."/>
            <person name="Bult C.J."/>
            <person name="Agarwala R."/>
            <person name="Cherry J.L."/>
            <person name="DiCuccio M."/>
            <person name="Hlavina W."/>
            <person name="Kapustin Y."/>
            <person name="Meric P."/>
            <person name="Maglott D."/>
            <person name="Birtle Z."/>
            <person name="Marques A.C."/>
            <person name="Graves T."/>
            <person name="Zhou S."/>
            <person name="Teague B."/>
            <person name="Potamousis K."/>
            <person name="Churas C."/>
            <person name="Place M."/>
            <person name="Herschleb J."/>
            <person name="Runnheim R."/>
            <person name="Forrest D."/>
            <person name="Amos-Landgraf J."/>
            <person name="Schwartz D.C."/>
            <person name="Cheng Z."/>
            <person name="Lindblad-Toh K."/>
            <person name="Eichler E.E."/>
            <person name="Ponting C.P."/>
        </authorList>
    </citation>
    <scope>NUCLEOTIDE SEQUENCE [LARGE SCALE GENOMIC DNA]</scope>
    <source>
        <strain>C57BL/6J</strain>
    </source>
</reference>
<reference key="8">
    <citation type="journal article" date="2004" name="Genome Res.">
        <title>The status, quality, and expansion of the NIH full-length cDNA project: the Mammalian Gene Collection (MGC).</title>
        <authorList>
            <consortium name="The MGC Project Team"/>
        </authorList>
    </citation>
    <scope>NUCLEOTIDE SEQUENCE [LARGE SCALE MRNA] (ISOFORM LONG)</scope>
    <source>
        <strain>FVB/N</strain>
        <tissue>Mammary gland</tissue>
    </source>
</reference>
<reference key="9">
    <citation type="journal article" date="2006" name="J. Neurosci. Res.">
        <title>Influence of caloric restriction on motor behavior, longevity, and brain lipid composition in Sandhoff disease mice.</title>
        <authorList>
            <person name="Denny C.A."/>
            <person name="Kasperzyk J.L."/>
            <person name="Gorham K.N."/>
            <person name="Bronson R.T."/>
            <person name="Seyfried T.N."/>
        </authorList>
    </citation>
    <scope>NUCLEOTIDE SEQUENCE [MRNA] OF 33-203 (ISOFORMS LONG/SHORT)</scope>
    <source>
        <strain>129/Sv</strain>
        <tissue>Brain</tissue>
    </source>
</reference>
<reference key="10">
    <citation type="journal article" date="2010" name="Cell">
        <title>A tissue-specific atlas of mouse protein phosphorylation and expression.</title>
        <authorList>
            <person name="Huttlin E.L."/>
            <person name="Jedrychowski M.P."/>
            <person name="Elias J.E."/>
            <person name="Goswami T."/>
            <person name="Rad R."/>
            <person name="Beausoleil S.A."/>
            <person name="Villen J."/>
            <person name="Haas W."/>
            <person name="Sowa M.E."/>
            <person name="Gygi S.P."/>
        </authorList>
    </citation>
    <scope>IDENTIFICATION BY MASS SPECTROMETRY [LARGE SCALE ANALYSIS]</scope>
    <source>
        <tissue>Spleen</tissue>
    </source>
</reference>
<accession>P31996</accession>
<accession>O54688</accession>
<accession>O70321</accession>
<accession>Q3S4A9</accession>
<accession>Q5F2A8</accession>
<accession>Q9DD15</accession>
<comment type="function">
    <text>Could play a role in phagocytic activities of tissue macrophages, both in intracellular lysosomal metabolism and extracellular cell-cell and cell-pathogen interactions. Binds to tissue- and organ-specific lectins or selectins, allowing homing of macrophage subsets to particular sites. Rapid recirculation of CD68 from endosomes and lysosomes to the plasma membrane may allow macrophages to crawl over selectin-bearing substrates or other cells.</text>
</comment>
<comment type="subcellular location">
    <molecule>Isoform Long</molecule>
    <subcellularLocation>
        <location>Endosome membrane</location>
        <topology>Single-pass type I membrane protein</topology>
    </subcellularLocation>
    <subcellularLocation>
        <location>Lysosome membrane</location>
        <topology>Single-pass type I membrane protein</topology>
    </subcellularLocation>
</comment>
<comment type="subcellular location">
    <molecule>Isoform Short</molecule>
    <subcellularLocation>
        <location>Cell membrane</location>
        <topology>Single-pass type I membrane protein</topology>
    </subcellularLocation>
</comment>
<comment type="alternative products">
    <event type="alternative splicing"/>
    <isoform>
        <id>P31996-1</id>
        <name>Long</name>
        <sequence type="displayed"/>
    </isoform>
    <isoform>
        <id>P31996-2</id>
        <name>Short</name>
        <sequence type="described" ref="VSP_003043"/>
    </isoform>
</comment>
<comment type="tissue specificity">
    <text>Expressed in tissue macrophages and to a lesser extent in dendritic cells.</text>
</comment>
<comment type="PTM">
    <text>N- and O-glycosylated.</text>
</comment>
<comment type="similarity">
    <text evidence="2">Belongs to the LAMP family.</text>
</comment>
<comment type="caution">
    <text evidence="5">CD68 is a commonly used marker for macrophages. However, a number of studies in human have shown that CD68 antibodies react with other hematopoietic and non-hematopoietic cell types, suggesting that CD68 may not be a macrophage-specific antigen.</text>
</comment>
<comment type="sequence caution" evidence="5">
    <conflict type="erroneous gene model prediction">
        <sequence resource="EMBL-CDS" id="BAA23738"/>
    </conflict>
</comment>
<sequence length="326" mass="34818">MRLPVCLILLGPLIAQGTEEDCPHKKAVTLLPSFTMTPTATESTASPTTSHRPTTTSHGNVTVHTSSGPTTVTHNPATTTSHGNATISHATVSPTTNGTATSPRSSTVGPHPGPPPPSPSPRSKGALGNYTWANGSQPCVQLQAQIQIRILYPIQGGRKAWGISVLNPNKTKVQGGCDGTHPHLSLSFPYGQLTFGFKQDLHQSPSTVYLDYMAVEYNVSFPQAAQWTFMAQNSSLRELQAPLGQSFCCGNASIVLSPAVHLDLLSLRLQAAQLPDKGHFGPCFSCNRDQSLLLPLIIGLVLLGLLTLVLIAFCITRRRQSTYQPL</sequence>
<dbReference type="EMBL" id="X68273">
    <property type="protein sequence ID" value="CAA48334.1"/>
    <property type="molecule type" value="mRNA"/>
</dbReference>
<dbReference type="EMBL" id="AF022651">
    <property type="protein sequence ID" value="AAC40151.1"/>
    <property type="molecule type" value="Genomic_DNA"/>
</dbReference>
<dbReference type="EMBL" id="AF045554">
    <property type="protein sequence ID" value="AAC15685.1"/>
    <property type="molecule type" value="Genomic_DNA"/>
</dbReference>
<dbReference type="EMBL" id="AF039399">
    <property type="protein sequence ID" value="AAC40056.1"/>
    <property type="molecule type" value="Genomic_DNA"/>
</dbReference>
<dbReference type="EMBL" id="AB009287">
    <property type="protein sequence ID" value="BAA23738.1"/>
    <property type="status" value="ALT_SEQ"/>
    <property type="molecule type" value="Genomic_DNA"/>
</dbReference>
<dbReference type="EMBL" id="AK002264">
    <property type="protein sequence ID" value="BAB21975.1"/>
    <property type="molecule type" value="mRNA"/>
</dbReference>
<dbReference type="EMBL" id="AK170443">
    <property type="protein sequence ID" value="BAE41801.1"/>
    <property type="molecule type" value="mRNA"/>
</dbReference>
<dbReference type="EMBL" id="AL603707">
    <property type="status" value="NOT_ANNOTATED_CDS"/>
    <property type="molecule type" value="Genomic_DNA"/>
</dbReference>
<dbReference type="EMBL" id="BC021637">
    <property type="protein sequence ID" value="AAH21637.1"/>
    <property type="molecule type" value="mRNA"/>
</dbReference>
<dbReference type="EMBL" id="DQ167574">
    <property type="protein sequence ID" value="ABA02181.1"/>
    <property type="molecule type" value="mRNA"/>
</dbReference>
<dbReference type="CCDS" id="CCDS70216.1">
    <molecule id="P31996-1"/>
</dbReference>
<dbReference type="PIR" id="A46676">
    <property type="entry name" value="A46676"/>
</dbReference>
<dbReference type="RefSeq" id="NP_001277987.1">
    <molecule id="P31996-1"/>
    <property type="nucleotide sequence ID" value="NM_001291058.1"/>
</dbReference>
<dbReference type="SMR" id="P31996"/>
<dbReference type="BioGRID" id="198607">
    <property type="interactions" value="1"/>
</dbReference>
<dbReference type="FunCoup" id="P31996">
    <property type="interactions" value="269"/>
</dbReference>
<dbReference type="STRING" id="10090.ENSMUSP00000018918"/>
<dbReference type="GlyCosmos" id="P31996">
    <property type="glycosylation" value="9 sites, No reported glycans"/>
</dbReference>
<dbReference type="GlyGen" id="P31996">
    <property type="glycosylation" value="9 sites, 3 N-linked glycans (3 sites)"/>
</dbReference>
<dbReference type="iPTMnet" id="P31996"/>
<dbReference type="PhosphoSitePlus" id="P31996"/>
<dbReference type="SwissPalm" id="P31996"/>
<dbReference type="PaxDb" id="10090-ENSMUSP00000104294"/>
<dbReference type="PeptideAtlas" id="P31996"/>
<dbReference type="ProteomicsDB" id="283750">
    <molecule id="P31996-1"/>
</dbReference>
<dbReference type="ProteomicsDB" id="283751">
    <molecule id="P31996-2"/>
</dbReference>
<dbReference type="Pumba" id="P31996"/>
<dbReference type="ABCD" id="P31996">
    <property type="antibodies" value="2 sequenced antibodies"/>
</dbReference>
<dbReference type="DNASU" id="12514"/>
<dbReference type="Ensembl" id="ENSMUST00000018918.12">
    <molecule id="P31996-1"/>
    <property type="protein sequence ID" value="ENSMUSP00000018918.6"/>
    <property type="gene ID" value="ENSMUSG00000018774.14"/>
</dbReference>
<dbReference type="GeneID" id="12514"/>
<dbReference type="KEGG" id="mmu:12514"/>
<dbReference type="UCSC" id="uc007jqy.2">
    <molecule id="P31996-1"/>
    <property type="organism name" value="mouse"/>
</dbReference>
<dbReference type="AGR" id="MGI:88342"/>
<dbReference type="CTD" id="968"/>
<dbReference type="MGI" id="MGI:88342">
    <property type="gene designation" value="Cd68"/>
</dbReference>
<dbReference type="VEuPathDB" id="HostDB:ENSMUSG00000018774"/>
<dbReference type="eggNOG" id="KOG4818">
    <property type="taxonomic scope" value="Eukaryota"/>
</dbReference>
<dbReference type="GeneTree" id="ENSGT00940000164775"/>
<dbReference type="HOGENOM" id="CLU_071610_0_0_1"/>
<dbReference type="InParanoid" id="P31996"/>
<dbReference type="OMA" id="TTKHPNT"/>
<dbReference type="OrthoDB" id="88631at9989"/>
<dbReference type="PhylomeDB" id="P31996"/>
<dbReference type="TreeFam" id="TF316339"/>
<dbReference type="Reactome" id="R-MMU-6798695">
    <property type="pathway name" value="Neutrophil degranulation"/>
</dbReference>
<dbReference type="BioGRID-ORCS" id="12514">
    <property type="hits" value="5 hits in 79 CRISPR screens"/>
</dbReference>
<dbReference type="PRO" id="PR:P31996"/>
<dbReference type="Proteomes" id="UP000000589">
    <property type="component" value="Chromosome 11"/>
</dbReference>
<dbReference type="RNAct" id="P31996">
    <property type="molecule type" value="protein"/>
</dbReference>
<dbReference type="Bgee" id="ENSMUSG00000018774">
    <property type="expression patterns" value="Expressed in stroma of bone marrow and 179 other cell types or tissues"/>
</dbReference>
<dbReference type="ExpressionAtlas" id="P31996">
    <property type="expression patterns" value="baseline and differential"/>
</dbReference>
<dbReference type="GO" id="GO:0010008">
    <property type="term" value="C:endosome membrane"/>
    <property type="evidence" value="ECO:0007669"/>
    <property type="project" value="UniProtKB-SubCell"/>
</dbReference>
<dbReference type="GO" id="GO:0005765">
    <property type="term" value="C:lysosomal membrane"/>
    <property type="evidence" value="ECO:0007669"/>
    <property type="project" value="UniProtKB-SubCell"/>
</dbReference>
<dbReference type="GO" id="GO:0005764">
    <property type="term" value="C:lysosome"/>
    <property type="evidence" value="ECO:0000314"/>
    <property type="project" value="ARUK-UCL"/>
</dbReference>
<dbReference type="GO" id="GO:0005886">
    <property type="term" value="C:plasma membrane"/>
    <property type="evidence" value="ECO:0000314"/>
    <property type="project" value="ARUK-UCL"/>
</dbReference>
<dbReference type="GO" id="GO:0071222">
    <property type="term" value="P:cellular response to lipopolysaccharide"/>
    <property type="evidence" value="ECO:0000314"/>
    <property type="project" value="ARUK-UCL"/>
</dbReference>
<dbReference type="GO" id="GO:0031669">
    <property type="term" value="P:cellular response to nutrient levels"/>
    <property type="evidence" value="ECO:0000314"/>
    <property type="project" value="ARUK-UCL"/>
</dbReference>
<dbReference type="GO" id="GO:0140052">
    <property type="term" value="P:cellular response to oxidised low-density lipoprotein particle stimulus"/>
    <property type="evidence" value="ECO:0000314"/>
    <property type="project" value="ARUK-UCL"/>
</dbReference>
<dbReference type="GO" id="GO:0002437">
    <property type="term" value="P:inflammatory response to antigenic stimulus"/>
    <property type="evidence" value="ECO:0000314"/>
    <property type="project" value="ARUK-UCL"/>
</dbReference>
<dbReference type="GO" id="GO:0002605">
    <property type="term" value="P:negative regulation of dendritic cell antigen processing and presentation"/>
    <property type="evidence" value="ECO:0000315"/>
    <property type="project" value="ARUK-UCL"/>
</dbReference>
<dbReference type="FunFam" id="2.40.160.110:FF:000007">
    <property type="entry name" value="CD68 molecule"/>
    <property type="match status" value="1"/>
</dbReference>
<dbReference type="Gene3D" id="2.40.160.110">
    <property type="match status" value="1"/>
</dbReference>
<dbReference type="InterPro" id="IPR048528">
    <property type="entry name" value="Lamp2-like_luminal"/>
</dbReference>
<dbReference type="InterPro" id="IPR018134">
    <property type="entry name" value="LAMP_CS"/>
</dbReference>
<dbReference type="InterPro" id="IPR002000">
    <property type="entry name" value="Lysosome-assoc_membr_glycop"/>
</dbReference>
<dbReference type="PANTHER" id="PTHR11506">
    <property type="entry name" value="LYSOSOME-ASSOCIATED MEMBRANE GLYCOPROTEIN"/>
    <property type="match status" value="1"/>
</dbReference>
<dbReference type="PANTHER" id="PTHR11506:SF2">
    <property type="entry name" value="MACROSIALIN"/>
    <property type="match status" value="1"/>
</dbReference>
<dbReference type="Pfam" id="PF01299">
    <property type="entry name" value="Lamp2-like_luminal"/>
    <property type="match status" value="1"/>
</dbReference>
<dbReference type="PRINTS" id="PR00336">
    <property type="entry name" value="LYSASSOCTDMP"/>
</dbReference>
<dbReference type="PROSITE" id="PS00311">
    <property type="entry name" value="LAMP_2"/>
    <property type="match status" value="1"/>
</dbReference>
<dbReference type="PROSITE" id="PS51407">
    <property type="entry name" value="LAMP_3"/>
    <property type="match status" value="1"/>
</dbReference>
<organism>
    <name type="scientific">Mus musculus</name>
    <name type="common">Mouse</name>
    <dbReference type="NCBI Taxonomy" id="10090"/>
    <lineage>
        <taxon>Eukaryota</taxon>
        <taxon>Metazoa</taxon>
        <taxon>Chordata</taxon>
        <taxon>Craniata</taxon>
        <taxon>Vertebrata</taxon>
        <taxon>Euteleostomi</taxon>
        <taxon>Mammalia</taxon>
        <taxon>Eutheria</taxon>
        <taxon>Euarchontoglires</taxon>
        <taxon>Glires</taxon>
        <taxon>Rodentia</taxon>
        <taxon>Myomorpha</taxon>
        <taxon>Muroidea</taxon>
        <taxon>Muridae</taxon>
        <taxon>Murinae</taxon>
        <taxon>Mus</taxon>
        <taxon>Mus</taxon>
    </lineage>
</organism>
<name>CD68_MOUSE</name>
<evidence type="ECO:0000255" key="1"/>
<evidence type="ECO:0000255" key="2">
    <source>
        <dbReference type="PROSITE-ProRule" id="PRU00740"/>
    </source>
</evidence>
<evidence type="ECO:0000256" key="3">
    <source>
        <dbReference type="SAM" id="MobiDB-lite"/>
    </source>
</evidence>
<evidence type="ECO:0000303" key="4">
    <source>
    </source>
</evidence>
<evidence type="ECO:0000305" key="5"/>
<protein>
    <recommendedName>
        <fullName>Macrosialin</fullName>
    </recommendedName>
    <cdAntigenName>CD68</cdAntigenName>
</protein>
<feature type="signal peptide" evidence="1">
    <location>
        <begin position="1"/>
        <end position="20"/>
    </location>
</feature>
<feature type="chain" id="PRO_0000017103" description="Macrosialin">
    <location>
        <begin position="21"/>
        <end position="326"/>
    </location>
</feature>
<feature type="topological domain" description="Extracellular" evidence="1">
    <location>
        <begin position="21"/>
        <end position="291"/>
    </location>
</feature>
<feature type="transmembrane region" description="Helical" evidence="2">
    <location>
        <begin position="292"/>
        <end position="316"/>
    </location>
</feature>
<feature type="topological domain" description="Cytoplasmic" evidence="2">
    <location>
        <begin position="317"/>
        <end position="326"/>
    </location>
</feature>
<feature type="repeat" description="1-1">
    <location>
        <begin position="44"/>
        <end position="49"/>
    </location>
</feature>
<feature type="repeat" description="2-1">
    <location>
        <begin position="50"/>
        <end position="64"/>
    </location>
</feature>
<feature type="repeat" description="1-2">
    <location>
        <begin position="65"/>
        <end position="72"/>
    </location>
</feature>
<feature type="repeat" description="2-2">
    <location>
        <begin position="73"/>
        <end position="88"/>
    </location>
</feature>
<feature type="region of interest" description="Mucin-like">
    <location>
        <begin position="21"/>
        <end position="109"/>
    </location>
</feature>
<feature type="region of interest" description="Disordered" evidence="3">
    <location>
        <begin position="38"/>
        <end position="129"/>
    </location>
</feature>
<feature type="compositionally biased region" description="Low complexity" evidence="3">
    <location>
        <begin position="38"/>
        <end position="58"/>
    </location>
</feature>
<feature type="compositionally biased region" description="Polar residues" evidence="3">
    <location>
        <begin position="59"/>
        <end position="69"/>
    </location>
</feature>
<feature type="compositionally biased region" description="Low complexity" evidence="3">
    <location>
        <begin position="70"/>
        <end position="80"/>
    </location>
</feature>
<feature type="compositionally biased region" description="Polar residues" evidence="3">
    <location>
        <begin position="81"/>
        <end position="108"/>
    </location>
</feature>
<feature type="compositionally biased region" description="Pro residues" evidence="3">
    <location>
        <begin position="111"/>
        <end position="120"/>
    </location>
</feature>
<feature type="glycosylation site" description="N-linked (GlcNAc...) asparagine" evidence="1">
    <location>
        <position position="60"/>
    </location>
</feature>
<feature type="glycosylation site" description="N-linked (GlcNAc...) asparagine" evidence="1">
    <location>
        <position position="84"/>
    </location>
</feature>
<feature type="glycosylation site" description="N-linked (GlcNAc...) asparagine" evidence="1">
    <location>
        <position position="97"/>
    </location>
</feature>
<feature type="glycosylation site" description="N-linked (GlcNAc...) asparagine" evidence="1">
    <location>
        <position position="129"/>
    </location>
</feature>
<feature type="glycosylation site" description="N-linked (GlcNAc...) asparagine" evidence="1">
    <location>
        <position position="134"/>
    </location>
</feature>
<feature type="glycosylation site" description="N-linked (GlcNAc...) asparagine" evidence="1">
    <location>
        <position position="169"/>
    </location>
</feature>
<feature type="glycosylation site" description="N-linked (GlcNAc...) asparagine" evidence="1">
    <location>
        <position position="218"/>
    </location>
</feature>
<feature type="glycosylation site" description="N-linked (GlcNAc...) asparagine" evidence="1">
    <location>
        <position position="233"/>
    </location>
</feature>
<feature type="glycosylation site" description="N-linked (GlcNAc...) asparagine" evidence="1">
    <location>
        <position position="251"/>
    </location>
</feature>
<feature type="disulfide bond" evidence="2">
    <location>
        <begin position="139"/>
        <end position="177"/>
    </location>
</feature>
<feature type="disulfide bond" evidence="2">
    <location>
        <begin position="249"/>
        <end position="286"/>
    </location>
</feature>
<feature type="splice variant" id="VSP_003043" description="In isoform Short." evidence="4">
    <location>
        <begin position="319"/>
        <end position="326"/>
    </location>
</feature>
<feature type="sequence conflict" description="In Ref. 3; AAC15685." evidence="5" ref="3">
    <original>P</original>
    <variation>T</variation>
    <location>
        <position position="117"/>
    </location>
</feature>
<feature type="sequence conflict" description="In Ref. 6; BAB21975." evidence="5" ref="6">
    <original>N</original>
    <variation>K</variation>
    <location>
        <position position="129"/>
    </location>
</feature>
<feature type="sequence conflict" description="In Ref. 3; AAC15685." evidence="5" ref="3">
    <original>Q</original>
    <variation>H</variation>
    <location>
        <position position="137"/>
    </location>
</feature>
<feature type="sequence conflict" description="In Ref. 6; BAB21975." evidence="5" ref="6">
    <original>P</original>
    <variation>T</variation>
    <location>
        <position position="205"/>
    </location>
</feature>
<keyword id="KW-0025">Alternative splicing</keyword>
<keyword id="KW-1003">Cell membrane</keyword>
<keyword id="KW-1015">Disulfide bond</keyword>
<keyword id="KW-0967">Endosome</keyword>
<keyword id="KW-0325">Glycoprotein</keyword>
<keyword id="KW-0458">Lysosome</keyword>
<keyword id="KW-0472">Membrane</keyword>
<keyword id="KW-1185">Reference proteome</keyword>
<keyword id="KW-0677">Repeat</keyword>
<keyword id="KW-0732">Signal</keyword>
<keyword id="KW-0812">Transmembrane</keyword>
<keyword id="KW-1133">Transmembrane helix</keyword>